<accession>B1WVZ0</accession>
<evidence type="ECO:0000255" key="1">
    <source>
        <dbReference type="HAMAP-Rule" id="MF_00127"/>
    </source>
</evidence>
<comment type="catalytic activity">
    <reaction evidence="1">
        <text>tRNA(His) + L-histidine + ATP = L-histidyl-tRNA(His) + AMP + diphosphate + H(+)</text>
        <dbReference type="Rhea" id="RHEA:17313"/>
        <dbReference type="Rhea" id="RHEA-COMP:9665"/>
        <dbReference type="Rhea" id="RHEA-COMP:9689"/>
        <dbReference type="ChEBI" id="CHEBI:15378"/>
        <dbReference type="ChEBI" id="CHEBI:30616"/>
        <dbReference type="ChEBI" id="CHEBI:33019"/>
        <dbReference type="ChEBI" id="CHEBI:57595"/>
        <dbReference type="ChEBI" id="CHEBI:78442"/>
        <dbReference type="ChEBI" id="CHEBI:78527"/>
        <dbReference type="ChEBI" id="CHEBI:456215"/>
        <dbReference type="EC" id="6.1.1.21"/>
    </reaction>
</comment>
<comment type="subunit">
    <text evidence="1">Homodimer.</text>
</comment>
<comment type="subcellular location">
    <subcellularLocation>
        <location evidence="1">Cytoplasm</location>
    </subcellularLocation>
</comment>
<comment type="similarity">
    <text evidence="1">Belongs to the class-II aminoacyl-tRNA synthetase family.</text>
</comment>
<feature type="chain" id="PRO_1000095547" description="Histidine--tRNA ligase">
    <location>
        <begin position="1"/>
        <end position="433"/>
    </location>
</feature>
<organism>
    <name type="scientific">Crocosphaera subtropica (strain ATCC 51142 / BH68)</name>
    <name type="common">Cyanothece sp. (strain ATCC 51142)</name>
    <dbReference type="NCBI Taxonomy" id="43989"/>
    <lineage>
        <taxon>Bacteria</taxon>
        <taxon>Bacillati</taxon>
        <taxon>Cyanobacteriota</taxon>
        <taxon>Cyanophyceae</taxon>
        <taxon>Oscillatoriophycideae</taxon>
        <taxon>Chroococcales</taxon>
        <taxon>Aphanothecaceae</taxon>
        <taxon>Crocosphaera</taxon>
        <taxon>Crocosphaera subtropica</taxon>
    </lineage>
</organism>
<reference key="1">
    <citation type="journal article" date="2008" name="Proc. Natl. Acad. Sci. U.S.A.">
        <title>The genome of Cyanothece 51142, a unicellular diazotrophic cyanobacterium important in the marine nitrogen cycle.</title>
        <authorList>
            <person name="Welsh E.A."/>
            <person name="Liberton M."/>
            <person name="Stoeckel J."/>
            <person name="Loh T."/>
            <person name="Elvitigala T."/>
            <person name="Wang C."/>
            <person name="Wollam A."/>
            <person name="Fulton R.S."/>
            <person name="Clifton S.W."/>
            <person name="Jacobs J.M."/>
            <person name="Aurora R."/>
            <person name="Ghosh B.K."/>
            <person name="Sherman L.A."/>
            <person name="Smith R.D."/>
            <person name="Wilson R.K."/>
            <person name="Pakrasi H.B."/>
        </authorList>
    </citation>
    <scope>NUCLEOTIDE SEQUENCE [LARGE SCALE GENOMIC DNA]</scope>
    <source>
        <strain>ATCC 51142 / BH68</strain>
    </source>
</reference>
<name>SYH_CROS5</name>
<gene>
    <name evidence="1" type="primary">hisS</name>
    <name type="ordered locus">cce_2975</name>
</gene>
<sequence length="433" mass="48578">MGTIQTLPGTRDILPEEIGYWQYVETVATQILSRAMYYEIRPPIFEQTSLFERGIGEATDVVGKEMYTFSDRGDRSLTLRPEGTAGVVRAYLQNNLYAAGGVQRLWYCGPMFRYERPQAGRQRQFHQIGLELIGTADPRADVEVIALATDILKTLGLQSLKLDINSVGDRNDRQNYREALVNYFLPYKAELDTDSQDRLQRNPLRILDSKDKRTKEINQNAPSILEHLGDASKKHFDQVQQLLTDLGIEYNINPCLVRGLDYYTHTAFEMISDDLGAQATVCGGGRYDGLVEELGGNPTPAVGWAIGMERLIILLKQLQSSPDMTPDIYIVSRGEAAEGQGLILAQKLRKEGLTVELDMSGSAFGKQFKRADRSGAIACIVLGEEEATNKTVQLKWLQSKEQQAMTQAELLTKVGELIEQLDRHKRTMNHSTQ</sequence>
<dbReference type="EC" id="6.1.1.21" evidence="1"/>
<dbReference type="EMBL" id="CP000806">
    <property type="protein sequence ID" value="ACB52323.1"/>
    <property type="molecule type" value="Genomic_DNA"/>
</dbReference>
<dbReference type="RefSeq" id="WP_009548015.1">
    <property type="nucleotide sequence ID" value="NC_010546.1"/>
</dbReference>
<dbReference type="SMR" id="B1WVZ0"/>
<dbReference type="STRING" id="43989.cce_2975"/>
<dbReference type="KEGG" id="cyt:cce_2975"/>
<dbReference type="eggNOG" id="COG0124">
    <property type="taxonomic scope" value="Bacteria"/>
</dbReference>
<dbReference type="HOGENOM" id="CLU_025113_1_1_3"/>
<dbReference type="OrthoDB" id="9800814at2"/>
<dbReference type="Proteomes" id="UP000001203">
    <property type="component" value="Chromosome circular"/>
</dbReference>
<dbReference type="GO" id="GO:0005737">
    <property type="term" value="C:cytoplasm"/>
    <property type="evidence" value="ECO:0007669"/>
    <property type="project" value="UniProtKB-SubCell"/>
</dbReference>
<dbReference type="GO" id="GO:0005524">
    <property type="term" value="F:ATP binding"/>
    <property type="evidence" value="ECO:0007669"/>
    <property type="project" value="UniProtKB-UniRule"/>
</dbReference>
<dbReference type="GO" id="GO:0004821">
    <property type="term" value="F:histidine-tRNA ligase activity"/>
    <property type="evidence" value="ECO:0007669"/>
    <property type="project" value="UniProtKB-UniRule"/>
</dbReference>
<dbReference type="GO" id="GO:0006427">
    <property type="term" value="P:histidyl-tRNA aminoacylation"/>
    <property type="evidence" value="ECO:0007669"/>
    <property type="project" value="UniProtKB-UniRule"/>
</dbReference>
<dbReference type="CDD" id="cd00773">
    <property type="entry name" value="HisRS-like_core"/>
    <property type="match status" value="1"/>
</dbReference>
<dbReference type="CDD" id="cd00859">
    <property type="entry name" value="HisRS_anticodon"/>
    <property type="match status" value="1"/>
</dbReference>
<dbReference type="FunFam" id="3.30.930.10:FF:000005">
    <property type="entry name" value="Histidine--tRNA ligase"/>
    <property type="match status" value="1"/>
</dbReference>
<dbReference type="Gene3D" id="3.40.50.800">
    <property type="entry name" value="Anticodon-binding domain"/>
    <property type="match status" value="1"/>
</dbReference>
<dbReference type="Gene3D" id="3.30.930.10">
    <property type="entry name" value="Bira Bifunctional Protein, Domain 2"/>
    <property type="match status" value="1"/>
</dbReference>
<dbReference type="HAMAP" id="MF_00127">
    <property type="entry name" value="His_tRNA_synth"/>
    <property type="match status" value="1"/>
</dbReference>
<dbReference type="InterPro" id="IPR006195">
    <property type="entry name" value="aa-tRNA-synth_II"/>
</dbReference>
<dbReference type="InterPro" id="IPR045864">
    <property type="entry name" value="aa-tRNA-synth_II/BPL/LPL"/>
</dbReference>
<dbReference type="InterPro" id="IPR004154">
    <property type="entry name" value="Anticodon-bd"/>
</dbReference>
<dbReference type="InterPro" id="IPR036621">
    <property type="entry name" value="Anticodon-bd_dom_sf"/>
</dbReference>
<dbReference type="InterPro" id="IPR015807">
    <property type="entry name" value="His-tRNA-ligase"/>
</dbReference>
<dbReference type="InterPro" id="IPR041715">
    <property type="entry name" value="HisRS-like_core"/>
</dbReference>
<dbReference type="InterPro" id="IPR004516">
    <property type="entry name" value="HisRS/HisZ"/>
</dbReference>
<dbReference type="InterPro" id="IPR033656">
    <property type="entry name" value="HisRS_anticodon"/>
</dbReference>
<dbReference type="NCBIfam" id="TIGR00442">
    <property type="entry name" value="hisS"/>
    <property type="match status" value="1"/>
</dbReference>
<dbReference type="PANTHER" id="PTHR43707:SF1">
    <property type="entry name" value="HISTIDINE--TRNA LIGASE, MITOCHONDRIAL-RELATED"/>
    <property type="match status" value="1"/>
</dbReference>
<dbReference type="PANTHER" id="PTHR43707">
    <property type="entry name" value="HISTIDYL-TRNA SYNTHETASE"/>
    <property type="match status" value="1"/>
</dbReference>
<dbReference type="Pfam" id="PF03129">
    <property type="entry name" value="HGTP_anticodon"/>
    <property type="match status" value="1"/>
</dbReference>
<dbReference type="Pfam" id="PF13393">
    <property type="entry name" value="tRNA-synt_His"/>
    <property type="match status" value="1"/>
</dbReference>
<dbReference type="PIRSF" id="PIRSF001549">
    <property type="entry name" value="His-tRNA_synth"/>
    <property type="match status" value="1"/>
</dbReference>
<dbReference type="SUPFAM" id="SSF52954">
    <property type="entry name" value="Class II aaRS ABD-related"/>
    <property type="match status" value="1"/>
</dbReference>
<dbReference type="SUPFAM" id="SSF55681">
    <property type="entry name" value="Class II aaRS and biotin synthetases"/>
    <property type="match status" value="1"/>
</dbReference>
<dbReference type="PROSITE" id="PS50862">
    <property type="entry name" value="AA_TRNA_LIGASE_II"/>
    <property type="match status" value="1"/>
</dbReference>
<protein>
    <recommendedName>
        <fullName evidence="1">Histidine--tRNA ligase</fullName>
        <ecNumber evidence="1">6.1.1.21</ecNumber>
    </recommendedName>
    <alternativeName>
        <fullName evidence="1">Histidyl-tRNA synthetase</fullName>
        <shortName evidence="1">HisRS</shortName>
    </alternativeName>
</protein>
<proteinExistence type="inferred from homology"/>
<keyword id="KW-0030">Aminoacyl-tRNA synthetase</keyword>
<keyword id="KW-0067">ATP-binding</keyword>
<keyword id="KW-0963">Cytoplasm</keyword>
<keyword id="KW-0436">Ligase</keyword>
<keyword id="KW-0547">Nucleotide-binding</keyword>
<keyword id="KW-0648">Protein biosynthesis</keyword>
<keyword id="KW-1185">Reference proteome</keyword>